<sequence length="661" mass="72602">MDSAPNFIPRLLLLSLLIVSIPLTSSQSDANTTNPSPSPPSDSDLCNGVFVSYTHTKGSKIPPNDTANQPYRFESVITVLNHGRDELKSWRVFVKFAHREILVSASNAVLSDGSSLPVSVENGTVFAGYPSSDLKSAIQTAGDVTQMQARVELVGTQFGVAPPNVPLPKNITLATDGWKCPKATQKGTNVLQVCCIPDPDYDNREIIDNEFLPRKDGDLTIMYDVVRSYSSNYMAQVTMENHNPLGRLDNWKLSFDWMRDEFIYTMKGAYPSIVDSSDCVDGPQAKHYQDLDFSNVLSCARRPTVIDLPPTKYNDSTFGLIPFCCRNGTILPRSMDPSKSSSVFQMQVYKMPPDLNISALSPPQNWRINGTLNPDYKCGPPVRVSPSQFVDPSGLPSNRTAFASWQVVCNITQPKDASPRCCVSFSAYFNDSIVPCKTCACGCSSNKAARACSATAPSLLLPQQALLVPFENRTELTVAWAYLKQRPVPNPMPCGDNCGVSINWHLATDYRGGWTARVTVFNWGETDFVDWFTAVQMKNAAPGFEKAYSFNASTIGINGKNNTIFMEGLPGLNYLVAERDGENPLKNPRIPGKQQSVMSFTKKLTPGINVPGGDGFPSKVFFNGEECSLPTILPMRSSQHRKHISVFLLALPVLALLILRA</sequence>
<evidence type="ECO:0000255" key="1"/>
<evidence type="ECO:0000256" key="2">
    <source>
        <dbReference type="SAM" id="MobiDB-lite"/>
    </source>
</evidence>
<evidence type="ECO:0000269" key="3">
    <source>
    </source>
</evidence>
<evidence type="ECO:0000305" key="4"/>
<organism>
    <name type="scientific">Arabidopsis thaliana</name>
    <name type="common">Mouse-ear cress</name>
    <dbReference type="NCBI Taxonomy" id="3702"/>
    <lineage>
        <taxon>Eukaryota</taxon>
        <taxon>Viridiplantae</taxon>
        <taxon>Streptophyta</taxon>
        <taxon>Embryophyta</taxon>
        <taxon>Tracheophyta</taxon>
        <taxon>Spermatophyta</taxon>
        <taxon>Magnoliopsida</taxon>
        <taxon>eudicotyledons</taxon>
        <taxon>Gunneridae</taxon>
        <taxon>Pentapetalae</taxon>
        <taxon>rosids</taxon>
        <taxon>malvids</taxon>
        <taxon>Brassicales</taxon>
        <taxon>Brassicaceae</taxon>
        <taxon>Camelineae</taxon>
        <taxon>Arabidopsis</taxon>
    </lineage>
</organism>
<comment type="subcellular location">
    <subcellularLocation>
        <location>Cell membrane</location>
        <topology>Lipid-anchor</topology>
        <topology>GPI-anchor</topology>
    </subcellularLocation>
</comment>
<comment type="tissue specificity">
    <text evidence="3">Expressed in roots, stems, leaves, flowers and siliques.</text>
</comment>
<comment type="similarity">
    <text evidence="4">Belongs to the COBRA family.</text>
</comment>
<name>COBL7_ARATH</name>
<proteinExistence type="evidence at transcript level"/>
<protein>
    <recommendedName>
        <fullName>COBRA-like protein 7</fullName>
    </recommendedName>
</protein>
<gene>
    <name type="primary">COBL7</name>
    <name type="synonym">SEB1</name>
    <name type="ordered locus">At4g16120</name>
    <name type="ORF">dl4100c</name>
</gene>
<dbReference type="EMBL" id="Y14423">
    <property type="protein sequence ID" value="CAA74765.1"/>
    <property type="molecule type" value="mRNA"/>
</dbReference>
<dbReference type="EMBL" id="Z97340">
    <property type="protein sequence ID" value="CAB10391.1"/>
    <property type="molecule type" value="Genomic_DNA"/>
</dbReference>
<dbReference type="EMBL" id="AL161543">
    <property type="protein sequence ID" value="CAB78654.1"/>
    <property type="molecule type" value="Genomic_DNA"/>
</dbReference>
<dbReference type="EMBL" id="CP002687">
    <property type="protein sequence ID" value="AEE83695.1"/>
    <property type="molecule type" value="Genomic_DNA"/>
</dbReference>
<dbReference type="EMBL" id="AK117261">
    <property type="protein sequence ID" value="BAC41936.1"/>
    <property type="molecule type" value="mRNA"/>
</dbReference>
<dbReference type="EMBL" id="BT005903">
    <property type="protein sequence ID" value="AAO64838.1"/>
    <property type="molecule type" value="mRNA"/>
</dbReference>
<dbReference type="PIR" id="E71427">
    <property type="entry name" value="E71427"/>
</dbReference>
<dbReference type="RefSeq" id="NP_567484.1">
    <property type="nucleotide sequence ID" value="NM_117705.6"/>
</dbReference>
<dbReference type="FunCoup" id="Q8GZ17">
    <property type="interactions" value="891"/>
</dbReference>
<dbReference type="STRING" id="3702.Q8GZ17"/>
<dbReference type="GlyCosmos" id="Q8GZ17">
    <property type="glycosylation" value="14 sites, No reported glycans"/>
</dbReference>
<dbReference type="GlyGen" id="Q8GZ17">
    <property type="glycosylation" value="14 sites"/>
</dbReference>
<dbReference type="PaxDb" id="3702-AT4G16120.1"/>
<dbReference type="ProteomicsDB" id="241139"/>
<dbReference type="EnsemblPlants" id="AT4G16120.1">
    <property type="protein sequence ID" value="AT4G16120.1"/>
    <property type="gene ID" value="AT4G16120"/>
</dbReference>
<dbReference type="GeneID" id="827298"/>
<dbReference type="Gramene" id="AT4G16120.1">
    <property type="protein sequence ID" value="AT4G16120.1"/>
    <property type="gene ID" value="AT4G16120"/>
</dbReference>
<dbReference type="KEGG" id="ath:AT4G16120"/>
<dbReference type="Araport" id="AT4G16120"/>
<dbReference type="TAIR" id="AT4G16120">
    <property type="gene designation" value="COBL7"/>
</dbReference>
<dbReference type="eggNOG" id="ENOG502QUPM">
    <property type="taxonomic scope" value="Eukaryota"/>
</dbReference>
<dbReference type="HOGENOM" id="CLU_420019_0_0_1"/>
<dbReference type="InParanoid" id="Q8GZ17"/>
<dbReference type="OMA" id="EMQVCCI"/>
<dbReference type="PhylomeDB" id="Q8GZ17"/>
<dbReference type="PRO" id="PR:Q8GZ17"/>
<dbReference type="Proteomes" id="UP000006548">
    <property type="component" value="Chromosome 4"/>
</dbReference>
<dbReference type="ExpressionAtlas" id="Q8GZ17">
    <property type="expression patterns" value="baseline and differential"/>
</dbReference>
<dbReference type="GO" id="GO:0005768">
    <property type="term" value="C:endosome"/>
    <property type="evidence" value="ECO:0007005"/>
    <property type="project" value="TAIR"/>
</dbReference>
<dbReference type="GO" id="GO:0005794">
    <property type="term" value="C:Golgi apparatus"/>
    <property type="evidence" value="ECO:0007005"/>
    <property type="project" value="TAIR"/>
</dbReference>
<dbReference type="GO" id="GO:0005886">
    <property type="term" value="C:plasma membrane"/>
    <property type="evidence" value="ECO:0007669"/>
    <property type="project" value="UniProtKB-SubCell"/>
</dbReference>
<dbReference type="GO" id="GO:0009506">
    <property type="term" value="C:plasmodesma"/>
    <property type="evidence" value="ECO:0007005"/>
    <property type="project" value="TAIR"/>
</dbReference>
<dbReference type="GO" id="GO:0098552">
    <property type="term" value="C:side of membrane"/>
    <property type="evidence" value="ECO:0007669"/>
    <property type="project" value="UniProtKB-KW"/>
</dbReference>
<dbReference type="GO" id="GO:0005802">
    <property type="term" value="C:trans-Golgi network"/>
    <property type="evidence" value="ECO:0007005"/>
    <property type="project" value="TAIR"/>
</dbReference>
<dbReference type="GO" id="GO:0010215">
    <property type="term" value="P:cellulose microfibril organization"/>
    <property type="evidence" value="ECO:0007669"/>
    <property type="project" value="InterPro"/>
</dbReference>
<dbReference type="InterPro" id="IPR056900">
    <property type="entry name" value="COB_C"/>
</dbReference>
<dbReference type="InterPro" id="IPR006918">
    <property type="entry name" value="COBRA_pln"/>
</dbReference>
<dbReference type="PANTHER" id="PTHR31052">
    <property type="entry name" value="COBRA-LIKE PROTEIN 7"/>
    <property type="match status" value="1"/>
</dbReference>
<dbReference type="PANTHER" id="PTHR31052:SF3">
    <property type="entry name" value="COBRA-LIKE PROTEIN 7"/>
    <property type="match status" value="1"/>
</dbReference>
<dbReference type="Pfam" id="PF25079">
    <property type="entry name" value="COB_C"/>
    <property type="match status" value="1"/>
</dbReference>
<dbReference type="Pfam" id="PF04833">
    <property type="entry name" value="COBRA"/>
    <property type="match status" value="1"/>
</dbReference>
<feature type="signal peptide" evidence="1">
    <location>
        <begin position="1"/>
        <end position="26"/>
    </location>
</feature>
<feature type="chain" id="PRO_0000005581" description="COBRA-like protein 7">
    <location>
        <begin position="27"/>
        <end position="637"/>
    </location>
</feature>
<feature type="propeptide" id="PRO_0000005582" description="Removed in mature form" evidence="4">
    <location>
        <begin position="638"/>
        <end position="661"/>
    </location>
</feature>
<feature type="region of interest" description="Disordered" evidence="2">
    <location>
        <begin position="26"/>
        <end position="45"/>
    </location>
</feature>
<feature type="lipid moiety-binding region" description="GPI-anchor amidated serine" evidence="1">
    <location>
        <position position="637"/>
    </location>
</feature>
<feature type="glycosylation site" description="N-linked (GlcNAc...) asparagine" evidence="1">
    <location>
        <position position="31"/>
    </location>
</feature>
<feature type="glycosylation site" description="N-linked (GlcNAc...) asparagine" evidence="1">
    <location>
        <position position="64"/>
    </location>
</feature>
<feature type="glycosylation site" description="N-linked (GlcNAc...) asparagine" evidence="1">
    <location>
        <position position="122"/>
    </location>
</feature>
<feature type="glycosylation site" description="N-linked (GlcNAc...) asparagine" evidence="1">
    <location>
        <position position="170"/>
    </location>
</feature>
<feature type="glycosylation site" description="N-linked (GlcNAc...) asparagine" evidence="1">
    <location>
        <position position="314"/>
    </location>
</feature>
<feature type="glycosylation site" description="N-linked (GlcNAc...) asparagine" evidence="1">
    <location>
        <position position="327"/>
    </location>
</feature>
<feature type="glycosylation site" description="N-linked (GlcNAc...) asparagine" evidence="1">
    <location>
        <position position="356"/>
    </location>
</feature>
<feature type="glycosylation site" description="N-linked (GlcNAc...) asparagine" evidence="1">
    <location>
        <position position="369"/>
    </location>
</feature>
<feature type="glycosylation site" description="N-linked (GlcNAc...) asparagine" evidence="1">
    <location>
        <position position="398"/>
    </location>
</feature>
<feature type="glycosylation site" description="N-linked (GlcNAc...) asparagine" evidence="1">
    <location>
        <position position="410"/>
    </location>
</feature>
<feature type="glycosylation site" description="N-linked (GlcNAc...) asparagine" evidence="1">
    <location>
        <position position="430"/>
    </location>
</feature>
<feature type="glycosylation site" description="N-linked (GlcNAc...) asparagine" evidence="1">
    <location>
        <position position="472"/>
    </location>
</feature>
<feature type="glycosylation site" description="N-linked (GlcNAc...) asparagine" evidence="1">
    <location>
        <position position="551"/>
    </location>
</feature>
<feature type="glycosylation site" description="N-linked (GlcNAc...) asparagine" evidence="1">
    <location>
        <position position="561"/>
    </location>
</feature>
<accession>Q8GZ17</accession>
<accession>O24605</accession>
<reference key="1">
    <citation type="journal article" date="1998" name="Gene">
        <title>Analysis of a 14-kb fragment containing a putative cell wall gene and a candidate for the ARA1, arabinose kinase, gene from chromosome IV of Arabidopsis thaliana.</title>
        <authorList>
            <person name="Gy I."/>
            <person name="Aubourg S."/>
            <person name="Sherson S."/>
            <person name="Cobbett C.S."/>
            <person name="Cheron A."/>
            <person name="Kreis M."/>
            <person name="Lecharny A."/>
        </authorList>
    </citation>
    <scope>NUCLEOTIDE SEQUENCE [MRNA]</scope>
    <source>
        <strain>cv. Columbia</strain>
        <tissue>Green siliques</tissue>
    </source>
</reference>
<reference key="2">
    <citation type="journal article" date="1998" name="Nature">
        <title>Analysis of 1.9 Mb of contiguous sequence from chromosome 4 of Arabidopsis thaliana.</title>
        <authorList>
            <person name="Bevan M."/>
            <person name="Bancroft I."/>
            <person name="Bent E."/>
            <person name="Love K."/>
            <person name="Goodman H.M."/>
            <person name="Dean C."/>
            <person name="Bergkamp R."/>
            <person name="Dirkse W."/>
            <person name="van Staveren M."/>
            <person name="Stiekema W."/>
            <person name="Drost L."/>
            <person name="Ridley P."/>
            <person name="Hudson S.-A."/>
            <person name="Patel K."/>
            <person name="Murphy G."/>
            <person name="Piffanelli P."/>
            <person name="Wedler H."/>
            <person name="Wedler E."/>
            <person name="Wambutt R."/>
            <person name="Weitzenegger T."/>
            <person name="Pohl T."/>
            <person name="Terryn N."/>
            <person name="Gielen J."/>
            <person name="Villarroel R."/>
            <person name="De Clercq R."/>
            <person name="van Montagu M."/>
            <person name="Lecharny A."/>
            <person name="Aubourg S."/>
            <person name="Gy I."/>
            <person name="Kreis M."/>
            <person name="Lao N."/>
            <person name="Kavanagh T."/>
            <person name="Hempel S."/>
            <person name="Kotter P."/>
            <person name="Entian K.-D."/>
            <person name="Rieger M."/>
            <person name="Schaefer M."/>
            <person name="Funk B."/>
            <person name="Mueller-Auer S."/>
            <person name="Silvey M."/>
            <person name="James R."/>
            <person name="Monfort A."/>
            <person name="Pons A."/>
            <person name="Puigdomenech P."/>
            <person name="Douka A."/>
            <person name="Voukelatou E."/>
            <person name="Milioni D."/>
            <person name="Hatzopoulos P."/>
            <person name="Piravandi E."/>
            <person name="Obermaier B."/>
            <person name="Hilbert H."/>
            <person name="Duesterhoeft A."/>
            <person name="Moores T."/>
            <person name="Jones J.D.G."/>
            <person name="Eneva T."/>
            <person name="Palme K."/>
            <person name="Benes V."/>
            <person name="Rechmann S."/>
            <person name="Ansorge W."/>
            <person name="Cooke R."/>
            <person name="Berger C."/>
            <person name="Delseny M."/>
            <person name="Voet M."/>
            <person name="Volckaert G."/>
            <person name="Mewes H.-W."/>
            <person name="Klosterman S."/>
            <person name="Schueller C."/>
            <person name="Chalwatzis N."/>
        </authorList>
    </citation>
    <scope>NUCLEOTIDE SEQUENCE [LARGE SCALE GENOMIC DNA]</scope>
    <source>
        <strain>cv. Columbia</strain>
    </source>
</reference>
<reference key="3">
    <citation type="journal article" date="1999" name="Nature">
        <title>Sequence and analysis of chromosome 4 of the plant Arabidopsis thaliana.</title>
        <authorList>
            <person name="Mayer K.F.X."/>
            <person name="Schueller C."/>
            <person name="Wambutt R."/>
            <person name="Murphy G."/>
            <person name="Volckaert G."/>
            <person name="Pohl T."/>
            <person name="Duesterhoeft A."/>
            <person name="Stiekema W."/>
            <person name="Entian K.-D."/>
            <person name="Terryn N."/>
            <person name="Harris B."/>
            <person name="Ansorge W."/>
            <person name="Brandt P."/>
            <person name="Grivell L.A."/>
            <person name="Rieger M."/>
            <person name="Weichselgartner M."/>
            <person name="de Simone V."/>
            <person name="Obermaier B."/>
            <person name="Mache R."/>
            <person name="Mueller M."/>
            <person name="Kreis M."/>
            <person name="Delseny M."/>
            <person name="Puigdomenech P."/>
            <person name="Watson M."/>
            <person name="Schmidtheini T."/>
            <person name="Reichert B."/>
            <person name="Portetelle D."/>
            <person name="Perez-Alonso M."/>
            <person name="Boutry M."/>
            <person name="Bancroft I."/>
            <person name="Vos P."/>
            <person name="Hoheisel J."/>
            <person name="Zimmermann W."/>
            <person name="Wedler H."/>
            <person name="Ridley P."/>
            <person name="Langham S.-A."/>
            <person name="McCullagh B."/>
            <person name="Bilham L."/>
            <person name="Robben J."/>
            <person name="van der Schueren J."/>
            <person name="Grymonprez B."/>
            <person name="Chuang Y.-J."/>
            <person name="Vandenbussche F."/>
            <person name="Braeken M."/>
            <person name="Weltjens I."/>
            <person name="Voet M."/>
            <person name="Bastiaens I."/>
            <person name="Aert R."/>
            <person name="Defoor E."/>
            <person name="Weitzenegger T."/>
            <person name="Bothe G."/>
            <person name="Ramsperger U."/>
            <person name="Hilbert H."/>
            <person name="Braun M."/>
            <person name="Holzer E."/>
            <person name="Brandt A."/>
            <person name="Peters S."/>
            <person name="van Staveren M."/>
            <person name="Dirkse W."/>
            <person name="Mooijman P."/>
            <person name="Klein Lankhorst R."/>
            <person name="Rose M."/>
            <person name="Hauf J."/>
            <person name="Koetter P."/>
            <person name="Berneiser S."/>
            <person name="Hempel S."/>
            <person name="Feldpausch M."/>
            <person name="Lamberth S."/>
            <person name="Van den Daele H."/>
            <person name="De Keyser A."/>
            <person name="Buysshaert C."/>
            <person name="Gielen J."/>
            <person name="Villarroel R."/>
            <person name="De Clercq R."/>
            <person name="van Montagu M."/>
            <person name="Rogers J."/>
            <person name="Cronin A."/>
            <person name="Quail M.A."/>
            <person name="Bray-Allen S."/>
            <person name="Clark L."/>
            <person name="Doggett J."/>
            <person name="Hall S."/>
            <person name="Kay M."/>
            <person name="Lennard N."/>
            <person name="McLay K."/>
            <person name="Mayes R."/>
            <person name="Pettett A."/>
            <person name="Rajandream M.A."/>
            <person name="Lyne M."/>
            <person name="Benes V."/>
            <person name="Rechmann S."/>
            <person name="Borkova D."/>
            <person name="Bloecker H."/>
            <person name="Scharfe M."/>
            <person name="Grimm M."/>
            <person name="Loehnert T.-H."/>
            <person name="Dose S."/>
            <person name="de Haan M."/>
            <person name="Maarse A.C."/>
            <person name="Schaefer M."/>
            <person name="Mueller-Auer S."/>
            <person name="Gabel C."/>
            <person name="Fuchs M."/>
            <person name="Fartmann B."/>
            <person name="Granderath K."/>
            <person name="Dauner D."/>
            <person name="Herzl A."/>
            <person name="Neumann S."/>
            <person name="Argiriou A."/>
            <person name="Vitale D."/>
            <person name="Liguori R."/>
            <person name="Piravandi E."/>
            <person name="Massenet O."/>
            <person name="Quigley F."/>
            <person name="Clabauld G."/>
            <person name="Muendlein A."/>
            <person name="Felber R."/>
            <person name="Schnabl S."/>
            <person name="Hiller R."/>
            <person name="Schmidt W."/>
            <person name="Lecharny A."/>
            <person name="Aubourg S."/>
            <person name="Chefdor F."/>
            <person name="Cooke R."/>
            <person name="Berger C."/>
            <person name="Monfort A."/>
            <person name="Casacuberta E."/>
            <person name="Gibbons T."/>
            <person name="Weber N."/>
            <person name="Vandenbol M."/>
            <person name="Bargues M."/>
            <person name="Terol J."/>
            <person name="Torres A."/>
            <person name="Perez-Perez A."/>
            <person name="Purnelle B."/>
            <person name="Bent E."/>
            <person name="Johnson S."/>
            <person name="Tacon D."/>
            <person name="Jesse T."/>
            <person name="Heijnen L."/>
            <person name="Schwarz S."/>
            <person name="Scholler P."/>
            <person name="Heber S."/>
            <person name="Francs P."/>
            <person name="Bielke C."/>
            <person name="Frishman D."/>
            <person name="Haase D."/>
            <person name="Lemcke K."/>
            <person name="Mewes H.-W."/>
            <person name="Stocker S."/>
            <person name="Zaccaria P."/>
            <person name="Bevan M."/>
            <person name="Wilson R.K."/>
            <person name="de la Bastide M."/>
            <person name="Habermann K."/>
            <person name="Parnell L."/>
            <person name="Dedhia N."/>
            <person name="Gnoj L."/>
            <person name="Schutz K."/>
            <person name="Huang E."/>
            <person name="Spiegel L."/>
            <person name="Sekhon M."/>
            <person name="Murray J."/>
            <person name="Sheet P."/>
            <person name="Cordes M."/>
            <person name="Abu-Threideh J."/>
            <person name="Stoneking T."/>
            <person name="Kalicki J."/>
            <person name="Graves T."/>
            <person name="Harmon G."/>
            <person name="Edwards J."/>
            <person name="Latreille P."/>
            <person name="Courtney L."/>
            <person name="Cloud J."/>
            <person name="Abbott A."/>
            <person name="Scott K."/>
            <person name="Johnson D."/>
            <person name="Minx P."/>
            <person name="Bentley D."/>
            <person name="Fulton B."/>
            <person name="Miller N."/>
            <person name="Greco T."/>
            <person name="Kemp K."/>
            <person name="Kramer J."/>
            <person name="Fulton L."/>
            <person name="Mardis E."/>
            <person name="Dante M."/>
            <person name="Pepin K."/>
            <person name="Hillier L.W."/>
            <person name="Nelson J."/>
            <person name="Spieth J."/>
            <person name="Ryan E."/>
            <person name="Andrews S."/>
            <person name="Geisel C."/>
            <person name="Layman D."/>
            <person name="Du H."/>
            <person name="Ali J."/>
            <person name="Berghoff A."/>
            <person name="Jones K."/>
            <person name="Drone K."/>
            <person name="Cotton M."/>
            <person name="Joshu C."/>
            <person name="Antonoiu B."/>
            <person name="Zidanic M."/>
            <person name="Strong C."/>
            <person name="Sun H."/>
            <person name="Lamar B."/>
            <person name="Yordan C."/>
            <person name="Ma P."/>
            <person name="Zhong J."/>
            <person name="Preston R."/>
            <person name="Vil D."/>
            <person name="Shekher M."/>
            <person name="Matero A."/>
            <person name="Shah R."/>
            <person name="Swaby I.K."/>
            <person name="O'Shaughnessy A."/>
            <person name="Rodriguez M."/>
            <person name="Hoffman J."/>
            <person name="Till S."/>
            <person name="Granat S."/>
            <person name="Shohdy N."/>
            <person name="Hasegawa A."/>
            <person name="Hameed A."/>
            <person name="Lodhi M."/>
            <person name="Johnson A."/>
            <person name="Chen E."/>
            <person name="Marra M.A."/>
            <person name="Martienssen R."/>
            <person name="McCombie W.R."/>
        </authorList>
    </citation>
    <scope>NUCLEOTIDE SEQUENCE [LARGE SCALE GENOMIC DNA]</scope>
    <source>
        <strain>cv. Columbia</strain>
    </source>
</reference>
<reference key="4">
    <citation type="journal article" date="2017" name="Plant J.">
        <title>Araport11: a complete reannotation of the Arabidopsis thaliana reference genome.</title>
        <authorList>
            <person name="Cheng C.Y."/>
            <person name="Krishnakumar V."/>
            <person name="Chan A.P."/>
            <person name="Thibaud-Nissen F."/>
            <person name="Schobel S."/>
            <person name="Town C.D."/>
        </authorList>
    </citation>
    <scope>GENOME REANNOTATION</scope>
    <source>
        <strain>cv. Columbia</strain>
    </source>
</reference>
<reference key="5">
    <citation type="journal article" date="2002" name="Science">
        <title>Functional annotation of a full-length Arabidopsis cDNA collection.</title>
        <authorList>
            <person name="Seki M."/>
            <person name="Narusaka M."/>
            <person name="Kamiya A."/>
            <person name="Ishida J."/>
            <person name="Satou M."/>
            <person name="Sakurai T."/>
            <person name="Nakajima M."/>
            <person name="Enju A."/>
            <person name="Akiyama K."/>
            <person name="Oono Y."/>
            <person name="Muramatsu M."/>
            <person name="Hayashizaki Y."/>
            <person name="Kawai J."/>
            <person name="Carninci P."/>
            <person name="Itoh M."/>
            <person name="Ishii Y."/>
            <person name="Arakawa T."/>
            <person name="Shibata K."/>
            <person name="Shinagawa A."/>
            <person name="Shinozaki K."/>
        </authorList>
    </citation>
    <scope>NUCLEOTIDE SEQUENCE [LARGE SCALE MRNA] OF 147-661</scope>
    <source>
        <strain>cv. Columbia</strain>
    </source>
</reference>
<reference key="6">
    <citation type="journal article" date="2003" name="Science">
        <title>Empirical analysis of transcriptional activity in the Arabidopsis genome.</title>
        <authorList>
            <person name="Yamada K."/>
            <person name="Lim J."/>
            <person name="Dale J.M."/>
            <person name="Chen H."/>
            <person name="Shinn P."/>
            <person name="Palm C.J."/>
            <person name="Southwick A.M."/>
            <person name="Wu H.C."/>
            <person name="Kim C.J."/>
            <person name="Nguyen M."/>
            <person name="Pham P.K."/>
            <person name="Cheuk R.F."/>
            <person name="Karlin-Newmann G."/>
            <person name="Liu S.X."/>
            <person name="Lam B."/>
            <person name="Sakano H."/>
            <person name="Wu T."/>
            <person name="Yu G."/>
            <person name="Miranda M."/>
            <person name="Quach H.L."/>
            <person name="Tripp M."/>
            <person name="Chang C.H."/>
            <person name="Lee J.M."/>
            <person name="Toriumi M.J."/>
            <person name="Chan M.M."/>
            <person name="Tang C.C."/>
            <person name="Onodera C.S."/>
            <person name="Deng J.M."/>
            <person name="Akiyama K."/>
            <person name="Ansari Y."/>
            <person name="Arakawa T."/>
            <person name="Banh J."/>
            <person name="Banno F."/>
            <person name="Bowser L."/>
            <person name="Brooks S.Y."/>
            <person name="Carninci P."/>
            <person name="Chao Q."/>
            <person name="Choy N."/>
            <person name="Enju A."/>
            <person name="Goldsmith A.D."/>
            <person name="Gurjal M."/>
            <person name="Hansen N.F."/>
            <person name="Hayashizaki Y."/>
            <person name="Johnson-Hopson C."/>
            <person name="Hsuan V.W."/>
            <person name="Iida K."/>
            <person name="Karnes M."/>
            <person name="Khan S."/>
            <person name="Koesema E."/>
            <person name="Ishida J."/>
            <person name="Jiang P.X."/>
            <person name="Jones T."/>
            <person name="Kawai J."/>
            <person name="Kamiya A."/>
            <person name="Meyers C."/>
            <person name="Nakajima M."/>
            <person name="Narusaka M."/>
            <person name="Seki M."/>
            <person name="Sakurai T."/>
            <person name="Satou M."/>
            <person name="Tamse R."/>
            <person name="Vaysberg M."/>
            <person name="Wallender E.K."/>
            <person name="Wong C."/>
            <person name="Yamamura Y."/>
            <person name="Yuan S."/>
            <person name="Shinozaki K."/>
            <person name="Davis R.W."/>
            <person name="Theologis A."/>
            <person name="Ecker J.R."/>
        </authorList>
    </citation>
    <scope>NUCLEOTIDE SEQUENCE [LARGE SCALE MRNA] OF 147-661</scope>
    <source>
        <strain>cv. Columbia</strain>
    </source>
</reference>
<reference key="7">
    <citation type="journal article" date="2002" name="Plant Physiol.">
        <title>The COBRA family of putative GPI-anchored proteins in Arabidopsis. A new fellowship in expansion.</title>
        <authorList>
            <person name="Roudier F."/>
            <person name="Schindelman G."/>
            <person name="DeSalle R."/>
            <person name="Benfey P.N."/>
        </authorList>
    </citation>
    <scope>TISSUE SPECIFICITY</scope>
</reference>
<keyword id="KW-1003">Cell membrane</keyword>
<keyword id="KW-0325">Glycoprotein</keyword>
<keyword id="KW-0336">GPI-anchor</keyword>
<keyword id="KW-0449">Lipoprotein</keyword>
<keyword id="KW-0472">Membrane</keyword>
<keyword id="KW-1185">Reference proteome</keyword>
<keyword id="KW-0732">Signal</keyword>